<dbReference type="EMBL" id="AY326954">
    <property type="protein sequence ID" value="AAQ01681.1"/>
    <property type="molecule type" value="mRNA"/>
</dbReference>
<dbReference type="EMBL" id="AL118522">
    <property type="status" value="NOT_ANNOTATED_CDS"/>
    <property type="molecule type" value="Genomic_DNA"/>
</dbReference>
<dbReference type="EMBL" id="CH471077">
    <property type="protein sequence ID" value="EAW75897.1"/>
    <property type="molecule type" value="Genomic_DNA"/>
</dbReference>
<dbReference type="EMBL" id="CH471077">
    <property type="protein sequence ID" value="EAW75898.1"/>
    <property type="molecule type" value="Genomic_DNA"/>
</dbReference>
<dbReference type="EMBL" id="BC104190">
    <property type="protein sequence ID" value="AAI04191.1"/>
    <property type="molecule type" value="mRNA"/>
</dbReference>
<dbReference type="EMBL" id="BC112985">
    <property type="protein sequence ID" value="AAI12986.1"/>
    <property type="molecule type" value="mRNA"/>
</dbReference>
<dbReference type="CCDS" id="CCDS13338.1">
    <molecule id="Q9H426-1"/>
</dbReference>
<dbReference type="CCDS" id="CCDS56191.1">
    <molecule id="Q9H426-2"/>
</dbReference>
<dbReference type="RefSeq" id="NP_001192246.1">
    <molecule id="Q9H426-2"/>
    <property type="nucleotide sequence ID" value="NM_001205317.2"/>
</dbReference>
<dbReference type="RefSeq" id="NP_892015.1">
    <molecule id="Q9H426-1"/>
    <property type="nucleotide sequence ID" value="NM_182970.4"/>
</dbReference>
<dbReference type="SMR" id="Q9H426"/>
<dbReference type="BioGRID" id="126676">
    <property type="interactions" value="8"/>
</dbReference>
<dbReference type="FunCoup" id="Q9H426">
    <property type="interactions" value="116"/>
</dbReference>
<dbReference type="IntAct" id="Q9H426">
    <property type="interactions" value="5"/>
</dbReference>
<dbReference type="MINT" id="Q9H426"/>
<dbReference type="STRING" id="9606.ENSP00000439287"/>
<dbReference type="iPTMnet" id="Q9H426"/>
<dbReference type="PhosphoSitePlus" id="Q9H426"/>
<dbReference type="BioMuta" id="RIMS4"/>
<dbReference type="DMDM" id="41017798"/>
<dbReference type="jPOST" id="Q9H426"/>
<dbReference type="MassIVE" id="Q9H426"/>
<dbReference type="PaxDb" id="9606-ENSP00000439287"/>
<dbReference type="PeptideAtlas" id="Q9H426"/>
<dbReference type="ProteomicsDB" id="15214"/>
<dbReference type="ProteomicsDB" id="80783">
    <molecule id="Q9H426-1"/>
</dbReference>
<dbReference type="Antibodypedia" id="43706">
    <property type="antibodies" value="114 antibodies from 25 providers"/>
</dbReference>
<dbReference type="DNASU" id="140730"/>
<dbReference type="Ensembl" id="ENST00000372851.8">
    <molecule id="Q9H426-1"/>
    <property type="protein sequence ID" value="ENSP00000361942.4"/>
    <property type="gene ID" value="ENSG00000101098.13"/>
</dbReference>
<dbReference type="Ensembl" id="ENST00000541604.2">
    <molecule id="Q9H426-2"/>
    <property type="protein sequence ID" value="ENSP00000439287.1"/>
    <property type="gene ID" value="ENSG00000101098.13"/>
</dbReference>
<dbReference type="GeneID" id="140730"/>
<dbReference type="KEGG" id="hsa:140730"/>
<dbReference type="MANE-Select" id="ENST00000372851.8">
    <property type="protein sequence ID" value="ENSP00000361942.4"/>
    <property type="RefSeq nucleotide sequence ID" value="NM_182970.4"/>
    <property type="RefSeq protein sequence ID" value="NP_892015.1"/>
</dbReference>
<dbReference type="UCSC" id="uc002xms.4">
    <molecule id="Q9H426-1"/>
    <property type="organism name" value="human"/>
</dbReference>
<dbReference type="AGR" id="HGNC:16183"/>
<dbReference type="CTD" id="140730"/>
<dbReference type="DisGeNET" id="140730"/>
<dbReference type="GeneCards" id="RIMS4"/>
<dbReference type="HGNC" id="HGNC:16183">
    <property type="gene designation" value="RIMS4"/>
</dbReference>
<dbReference type="HPA" id="ENSG00000101098">
    <property type="expression patterns" value="Tissue enhanced (brain)"/>
</dbReference>
<dbReference type="MIM" id="611601">
    <property type="type" value="gene"/>
</dbReference>
<dbReference type="neXtProt" id="NX_Q9H426"/>
<dbReference type="OpenTargets" id="ENSG00000101098"/>
<dbReference type="PharmGKB" id="PA25733"/>
<dbReference type="VEuPathDB" id="HostDB:ENSG00000101098"/>
<dbReference type="eggNOG" id="KOG2060">
    <property type="taxonomic scope" value="Eukaryota"/>
</dbReference>
<dbReference type="GeneTree" id="ENSGT00940000158934"/>
<dbReference type="HOGENOM" id="CLU_071205_0_0_1"/>
<dbReference type="InParanoid" id="Q9H426"/>
<dbReference type="OMA" id="GLYMERS"/>
<dbReference type="OrthoDB" id="420032at2759"/>
<dbReference type="PAN-GO" id="Q9H426">
    <property type="GO annotations" value="0 GO annotations based on evolutionary models"/>
</dbReference>
<dbReference type="PhylomeDB" id="Q9H426"/>
<dbReference type="PathwayCommons" id="Q9H426"/>
<dbReference type="SignaLink" id="Q9H426"/>
<dbReference type="BioGRID-ORCS" id="140730">
    <property type="hits" value="13 hits in 1143 CRISPR screens"/>
</dbReference>
<dbReference type="ChiTaRS" id="RIMS4">
    <property type="organism name" value="human"/>
</dbReference>
<dbReference type="GenomeRNAi" id="140730"/>
<dbReference type="Pharos" id="Q9H426">
    <property type="development level" value="Tbio"/>
</dbReference>
<dbReference type="PRO" id="PR:Q9H426"/>
<dbReference type="Proteomes" id="UP000005640">
    <property type="component" value="Chromosome 20"/>
</dbReference>
<dbReference type="RNAct" id="Q9H426">
    <property type="molecule type" value="protein"/>
</dbReference>
<dbReference type="Bgee" id="ENSG00000101098">
    <property type="expression patterns" value="Expressed in sural nerve and 142 other cell types or tissues"/>
</dbReference>
<dbReference type="GO" id="GO:0048786">
    <property type="term" value="C:presynaptic active zone"/>
    <property type="evidence" value="ECO:0000304"/>
    <property type="project" value="ParkinsonsUK-UCL"/>
</dbReference>
<dbReference type="GO" id="GO:0097060">
    <property type="term" value="C:synaptic membrane"/>
    <property type="evidence" value="ECO:0000250"/>
    <property type="project" value="ParkinsonsUK-UCL"/>
</dbReference>
<dbReference type="GO" id="GO:0031267">
    <property type="term" value="F:small GTPase binding"/>
    <property type="evidence" value="ECO:0007669"/>
    <property type="project" value="InterPro"/>
</dbReference>
<dbReference type="GO" id="GO:0044325">
    <property type="term" value="F:transmembrane transporter binding"/>
    <property type="evidence" value="ECO:0000250"/>
    <property type="project" value="ParkinsonsUK-UCL"/>
</dbReference>
<dbReference type="GO" id="GO:0006887">
    <property type="term" value="P:exocytosis"/>
    <property type="evidence" value="ECO:0007669"/>
    <property type="project" value="UniProtKB-KW"/>
</dbReference>
<dbReference type="GO" id="GO:0006836">
    <property type="term" value="P:neurotransmitter transport"/>
    <property type="evidence" value="ECO:0007669"/>
    <property type="project" value="UniProtKB-KW"/>
</dbReference>
<dbReference type="GO" id="GO:0042391">
    <property type="term" value="P:regulation of membrane potential"/>
    <property type="evidence" value="ECO:0000250"/>
    <property type="project" value="ParkinsonsUK-UCL"/>
</dbReference>
<dbReference type="GO" id="GO:2000300">
    <property type="term" value="P:regulation of synaptic vesicle exocytosis"/>
    <property type="evidence" value="ECO:0000250"/>
    <property type="project" value="ParkinsonsUK-UCL"/>
</dbReference>
<dbReference type="FunFam" id="2.60.40.150:FF:000001">
    <property type="entry name" value="Regulating synaptic membrane exocytosis 3, isoform CRA_a"/>
    <property type="match status" value="1"/>
</dbReference>
<dbReference type="Gene3D" id="2.60.40.150">
    <property type="entry name" value="C2 domain"/>
    <property type="match status" value="1"/>
</dbReference>
<dbReference type="InterPro" id="IPR000008">
    <property type="entry name" value="C2_dom"/>
</dbReference>
<dbReference type="InterPro" id="IPR035892">
    <property type="entry name" value="C2_domain_sf"/>
</dbReference>
<dbReference type="InterPro" id="IPR039032">
    <property type="entry name" value="Rim-like"/>
</dbReference>
<dbReference type="PANTHER" id="PTHR12157:SF26">
    <property type="entry name" value="REGULATING SYNAPTIC MEMBRANE EXOCYTOSIS 4"/>
    <property type="match status" value="1"/>
</dbReference>
<dbReference type="PANTHER" id="PTHR12157">
    <property type="entry name" value="REGULATING SYNAPTIC MEMBRANE EXOCYTOSIS PROTEIN"/>
    <property type="match status" value="1"/>
</dbReference>
<dbReference type="Pfam" id="PF00168">
    <property type="entry name" value="C2"/>
    <property type="match status" value="1"/>
</dbReference>
<dbReference type="SMART" id="SM00239">
    <property type="entry name" value="C2"/>
    <property type="match status" value="1"/>
</dbReference>
<dbReference type="SUPFAM" id="SSF49562">
    <property type="entry name" value="C2 domain (Calcium/lipid-binding domain, CaLB)"/>
    <property type="match status" value="1"/>
</dbReference>
<dbReference type="PROSITE" id="PS50004">
    <property type="entry name" value="C2"/>
    <property type="match status" value="1"/>
</dbReference>
<reference key="1">
    <citation type="journal article" date="2003" name="Genomics">
        <title>Genomic definition of RIM proteins: evolutionary amplification of a family of synaptic regulatory proteins.</title>
        <authorList>
            <person name="Wang Y."/>
            <person name="Suedhof T.C."/>
        </authorList>
    </citation>
    <scope>NUCLEOTIDE SEQUENCE [MRNA] (ISOFORM 1)</scope>
</reference>
<reference key="2">
    <citation type="journal article" date="2001" name="Nature">
        <title>The DNA sequence and comparative analysis of human chromosome 20.</title>
        <authorList>
            <person name="Deloukas P."/>
            <person name="Matthews L.H."/>
            <person name="Ashurst J.L."/>
            <person name="Burton J."/>
            <person name="Gilbert J.G.R."/>
            <person name="Jones M."/>
            <person name="Stavrides G."/>
            <person name="Almeida J.P."/>
            <person name="Babbage A.K."/>
            <person name="Bagguley C.L."/>
            <person name="Bailey J."/>
            <person name="Barlow K.F."/>
            <person name="Bates K.N."/>
            <person name="Beard L.M."/>
            <person name="Beare D.M."/>
            <person name="Beasley O.P."/>
            <person name="Bird C.P."/>
            <person name="Blakey S.E."/>
            <person name="Bridgeman A.M."/>
            <person name="Brown A.J."/>
            <person name="Buck D."/>
            <person name="Burrill W.D."/>
            <person name="Butler A.P."/>
            <person name="Carder C."/>
            <person name="Carter N.P."/>
            <person name="Chapman J.C."/>
            <person name="Clamp M."/>
            <person name="Clark G."/>
            <person name="Clark L.N."/>
            <person name="Clark S.Y."/>
            <person name="Clee C.M."/>
            <person name="Clegg S."/>
            <person name="Cobley V.E."/>
            <person name="Collier R.E."/>
            <person name="Connor R.E."/>
            <person name="Corby N.R."/>
            <person name="Coulson A."/>
            <person name="Coville G.J."/>
            <person name="Deadman R."/>
            <person name="Dhami P.D."/>
            <person name="Dunn M."/>
            <person name="Ellington A.G."/>
            <person name="Frankland J.A."/>
            <person name="Fraser A."/>
            <person name="French L."/>
            <person name="Garner P."/>
            <person name="Grafham D.V."/>
            <person name="Griffiths C."/>
            <person name="Griffiths M.N.D."/>
            <person name="Gwilliam R."/>
            <person name="Hall R.E."/>
            <person name="Hammond S."/>
            <person name="Harley J.L."/>
            <person name="Heath P.D."/>
            <person name="Ho S."/>
            <person name="Holden J.L."/>
            <person name="Howden P.J."/>
            <person name="Huckle E."/>
            <person name="Hunt A.R."/>
            <person name="Hunt S.E."/>
            <person name="Jekosch K."/>
            <person name="Johnson C.M."/>
            <person name="Johnson D."/>
            <person name="Kay M.P."/>
            <person name="Kimberley A.M."/>
            <person name="King A."/>
            <person name="Knights A."/>
            <person name="Laird G.K."/>
            <person name="Lawlor S."/>
            <person name="Lehvaeslaiho M.H."/>
            <person name="Leversha M.A."/>
            <person name="Lloyd C."/>
            <person name="Lloyd D.M."/>
            <person name="Lovell J.D."/>
            <person name="Marsh V.L."/>
            <person name="Martin S.L."/>
            <person name="McConnachie L.J."/>
            <person name="McLay K."/>
            <person name="McMurray A.A."/>
            <person name="Milne S.A."/>
            <person name="Mistry D."/>
            <person name="Moore M.J.F."/>
            <person name="Mullikin J.C."/>
            <person name="Nickerson T."/>
            <person name="Oliver K."/>
            <person name="Parker A."/>
            <person name="Patel R."/>
            <person name="Pearce T.A.V."/>
            <person name="Peck A.I."/>
            <person name="Phillimore B.J.C.T."/>
            <person name="Prathalingam S.R."/>
            <person name="Plumb R.W."/>
            <person name="Ramsay H."/>
            <person name="Rice C.M."/>
            <person name="Ross M.T."/>
            <person name="Scott C.E."/>
            <person name="Sehra H.K."/>
            <person name="Shownkeen R."/>
            <person name="Sims S."/>
            <person name="Skuce C.D."/>
            <person name="Smith M.L."/>
            <person name="Soderlund C."/>
            <person name="Steward C.A."/>
            <person name="Sulston J.E."/>
            <person name="Swann R.M."/>
            <person name="Sycamore N."/>
            <person name="Taylor R."/>
            <person name="Tee L."/>
            <person name="Thomas D.W."/>
            <person name="Thorpe A."/>
            <person name="Tracey A."/>
            <person name="Tromans A.C."/>
            <person name="Vaudin M."/>
            <person name="Wall M."/>
            <person name="Wallis J.M."/>
            <person name="Whitehead S.L."/>
            <person name="Whittaker P."/>
            <person name="Willey D.L."/>
            <person name="Williams L."/>
            <person name="Williams S.A."/>
            <person name="Wilming L."/>
            <person name="Wray P.W."/>
            <person name="Hubbard T."/>
            <person name="Durbin R.M."/>
            <person name="Bentley D.R."/>
            <person name="Beck S."/>
            <person name="Rogers J."/>
        </authorList>
    </citation>
    <scope>NUCLEOTIDE SEQUENCE [LARGE SCALE GENOMIC DNA]</scope>
</reference>
<reference key="3">
    <citation type="submission" date="2005-09" db="EMBL/GenBank/DDBJ databases">
        <authorList>
            <person name="Mural R.J."/>
            <person name="Istrail S."/>
            <person name="Sutton G."/>
            <person name="Florea L."/>
            <person name="Halpern A.L."/>
            <person name="Mobarry C.M."/>
            <person name="Lippert R."/>
            <person name="Walenz B."/>
            <person name="Shatkay H."/>
            <person name="Dew I."/>
            <person name="Miller J.R."/>
            <person name="Flanigan M.J."/>
            <person name="Edwards N.J."/>
            <person name="Bolanos R."/>
            <person name="Fasulo D."/>
            <person name="Halldorsson B.V."/>
            <person name="Hannenhalli S."/>
            <person name="Turner R."/>
            <person name="Yooseph S."/>
            <person name="Lu F."/>
            <person name="Nusskern D.R."/>
            <person name="Shue B.C."/>
            <person name="Zheng X.H."/>
            <person name="Zhong F."/>
            <person name="Delcher A.L."/>
            <person name="Huson D.H."/>
            <person name="Kravitz S.A."/>
            <person name="Mouchard L."/>
            <person name="Reinert K."/>
            <person name="Remington K.A."/>
            <person name="Clark A.G."/>
            <person name="Waterman M.S."/>
            <person name="Eichler E.E."/>
            <person name="Adams M.D."/>
            <person name="Hunkapiller M.W."/>
            <person name="Myers E.W."/>
            <person name="Venter J.C."/>
        </authorList>
    </citation>
    <scope>NUCLEOTIDE SEQUENCE [LARGE SCALE GENOMIC DNA]</scope>
</reference>
<reference key="4">
    <citation type="journal article" date="2004" name="Genome Res.">
        <title>The status, quality, and expansion of the NIH full-length cDNA project: the Mammalian Gene Collection (MGC).</title>
        <authorList>
            <consortium name="The MGC Project Team"/>
        </authorList>
    </citation>
    <scope>NUCLEOTIDE SEQUENCE [LARGE SCALE MRNA] OF 2-269 (ISOFORM 1)</scope>
    <scope>NUCLEOTIDE SEQUENCE [LARGE SCALE MRNA] OF 2-269 (ISOFORM 2)</scope>
</reference>
<reference key="5">
    <citation type="journal article" date="2007" name="Science">
        <title>ATM and ATR substrate analysis reveals extensive protein networks responsive to DNA damage.</title>
        <authorList>
            <person name="Matsuoka S."/>
            <person name="Ballif B.A."/>
            <person name="Smogorzewska A."/>
            <person name="McDonald E.R. III"/>
            <person name="Hurov K.E."/>
            <person name="Luo J."/>
            <person name="Bakalarski C.E."/>
            <person name="Zhao Z."/>
            <person name="Solimini N."/>
            <person name="Lerenthal Y."/>
            <person name="Shiloh Y."/>
            <person name="Gygi S.P."/>
            <person name="Elledge S.J."/>
        </authorList>
    </citation>
    <scope>PHOSPHORYLATION [LARGE SCALE ANALYSIS] AT SER-254 AND SER-257</scope>
    <scope>IDENTIFICATION BY MASS SPECTROMETRY [LARGE SCALE ANALYSIS]</scope>
    <source>
        <tissue>Embryonic kidney</tissue>
    </source>
</reference>
<sequence>MERSQSRLSLSASFEALAIYFPCMNSFDDEDAGDSRRLKGAIQRSTETGLAVEMPSRTLRQASHESIEDSMNSYGSEGNLNYGGVCLASDAQFSDFLGSMGPAQFVGRQTLATTPMGDVEIGLQERNGQLEVDIIQARGLTAKPGSKTLPAAYIKAYLLENGICIAKKKTKVARKSLDPLYNQVLLFPESPQGKVLQVIVWGNYGRMERKQFMGVARVLLEELDLTTLAVGWYKLFPTSSMVDPATGPLLRQASQLSLESTVGPCGERS</sequence>
<name>RIMS4_HUMAN</name>
<evidence type="ECO:0000250" key="1"/>
<evidence type="ECO:0000255" key="2">
    <source>
        <dbReference type="PROSITE-ProRule" id="PRU00041"/>
    </source>
</evidence>
<evidence type="ECO:0000303" key="3">
    <source>
    </source>
</evidence>
<evidence type="ECO:0007744" key="4">
    <source>
    </source>
</evidence>
<organism>
    <name type="scientific">Homo sapiens</name>
    <name type="common">Human</name>
    <dbReference type="NCBI Taxonomy" id="9606"/>
    <lineage>
        <taxon>Eukaryota</taxon>
        <taxon>Metazoa</taxon>
        <taxon>Chordata</taxon>
        <taxon>Craniata</taxon>
        <taxon>Vertebrata</taxon>
        <taxon>Euteleostomi</taxon>
        <taxon>Mammalia</taxon>
        <taxon>Eutheria</taxon>
        <taxon>Euarchontoglires</taxon>
        <taxon>Primates</taxon>
        <taxon>Haplorrhini</taxon>
        <taxon>Catarrhini</taxon>
        <taxon>Hominidae</taxon>
        <taxon>Homo</taxon>
    </lineage>
</organism>
<gene>
    <name type="primary">RIMS4</name>
    <name type="synonym">C20orf190</name>
</gene>
<feature type="chain" id="PRO_0000190207" description="Regulating synaptic membrane exocytosis protein 4">
    <location>
        <begin position="1"/>
        <end position="269"/>
    </location>
</feature>
<feature type="domain" description="C2" evidence="2">
    <location>
        <begin position="115"/>
        <end position="233"/>
    </location>
</feature>
<feature type="modified residue" description="Phosphoserine" evidence="4">
    <location>
        <position position="254"/>
    </location>
</feature>
<feature type="modified residue" description="Phosphoserine" evidence="4">
    <location>
        <position position="257"/>
    </location>
</feature>
<feature type="splice variant" id="VSP_044881" description="In isoform 2." evidence="3">
    <original>A</original>
    <variation>AE</variation>
    <location>
        <position position="32"/>
    </location>
</feature>
<protein>
    <recommendedName>
        <fullName>Regulating synaptic membrane exocytosis protein 4</fullName>
    </recommendedName>
    <alternativeName>
        <fullName>RIM4 gamma</fullName>
    </alternativeName>
    <alternativeName>
        <fullName>Rab3-interacting molecule 4</fullName>
        <shortName>RIM 4</shortName>
    </alternativeName>
</protein>
<keyword id="KW-0025">Alternative splicing</keyword>
<keyword id="KW-0268">Exocytosis</keyword>
<keyword id="KW-0532">Neurotransmitter transport</keyword>
<keyword id="KW-0597">Phosphoprotein</keyword>
<keyword id="KW-1267">Proteomics identification</keyword>
<keyword id="KW-1185">Reference proteome</keyword>
<keyword id="KW-0770">Synapse</keyword>
<keyword id="KW-0813">Transport</keyword>
<proteinExistence type="evidence at protein level"/>
<accession>Q9H426</accession>
<accession>A4FU94</accession>
<accession>E1P613</accession>
<accession>Q3MI44</accession>
<accession>Q5JWT7</accession>
<comment type="function">
    <text evidence="1">Regulates synaptic membrane exocytosis.</text>
</comment>
<comment type="subunit">
    <text evidence="1">Binds PPFIA3 (By similarity). Does not bind RAB3.</text>
</comment>
<comment type="interaction">
    <interactant intactId="EBI-6660974">
        <id>Q9H426</id>
    </interactant>
    <interactant intactId="EBI-448369">
        <id>Q96FA3</id>
        <label>PELI1</label>
    </interactant>
    <organismsDiffer>false</organismsDiffer>
    <experiments>3</experiments>
</comment>
<comment type="subcellular location">
    <subcellularLocation>
        <location evidence="1">Synapse</location>
    </subcellularLocation>
</comment>
<comment type="alternative products">
    <event type="alternative splicing"/>
    <isoform>
        <id>Q9H426-1</id>
        <name>1</name>
        <sequence type="displayed"/>
    </isoform>
    <isoform>
        <id>Q9H426-2</id>
        <name>2</name>
        <sequence type="described" ref="VSP_044881"/>
    </isoform>
</comment>